<keyword id="KW-0066">ATP synthesis</keyword>
<keyword id="KW-0997">Cell inner membrane</keyword>
<keyword id="KW-1003">Cell membrane</keyword>
<keyword id="KW-0139">CF(1)</keyword>
<keyword id="KW-0375">Hydrogen ion transport</keyword>
<keyword id="KW-0406">Ion transport</keyword>
<keyword id="KW-0472">Membrane</keyword>
<keyword id="KW-1185">Reference proteome</keyword>
<keyword id="KW-0813">Transport</keyword>
<organism>
    <name type="scientific">Coxiella burnetii (strain RSA 493 / Nine Mile phase I)</name>
    <dbReference type="NCBI Taxonomy" id="227377"/>
    <lineage>
        <taxon>Bacteria</taxon>
        <taxon>Pseudomonadati</taxon>
        <taxon>Pseudomonadota</taxon>
        <taxon>Gammaproteobacteria</taxon>
        <taxon>Legionellales</taxon>
        <taxon>Coxiellaceae</taxon>
        <taxon>Coxiella</taxon>
    </lineage>
</organism>
<comment type="function">
    <text evidence="1">F(1)F(0) ATP synthase produces ATP from ADP in the presence of a proton or sodium gradient. F-type ATPases consist of two structural domains, F(1) containing the extramembraneous catalytic core and F(0) containing the membrane proton channel, linked together by a central stalk and a peripheral stalk. During catalysis, ATP synthesis in the catalytic domain of F(1) is coupled via a rotary mechanism of the central stalk subunits to proton translocation.</text>
</comment>
<comment type="function">
    <text evidence="1">This protein is part of the stalk that links CF(0) to CF(1). It either transmits conformational changes from CF(0) to CF(1) or is implicated in proton conduction.</text>
</comment>
<comment type="subunit">
    <text evidence="1">F-type ATPases have 2 components, F(1) - the catalytic core - and F(0) - the membrane proton channel. F(1) has five subunits: alpha(3), beta(3), gamma(1), delta(1), epsilon(1). F(0) has three main subunits: a(1), b(2) and c(10-14). The alpha and beta chains form an alternating ring which encloses part of the gamma chain. F(1) is attached to F(0) by a central stalk formed by the gamma and epsilon chains, while a peripheral stalk is formed by the delta and b chains.</text>
</comment>
<comment type="subcellular location">
    <subcellularLocation>
        <location evidence="1">Cell inner membrane</location>
        <topology evidence="1">Peripheral membrane protein</topology>
    </subcellularLocation>
</comment>
<comment type="similarity">
    <text evidence="1">Belongs to the ATPase delta chain family.</text>
</comment>
<protein>
    <recommendedName>
        <fullName evidence="1">ATP synthase subunit delta</fullName>
    </recommendedName>
    <alternativeName>
        <fullName evidence="1">ATP synthase F(1) sector subunit delta</fullName>
    </alternativeName>
    <alternativeName>
        <fullName evidence="1">F-type ATPase subunit delta</fullName>
        <shortName evidence="1">F-ATPase subunit delta</shortName>
    </alternativeName>
</protein>
<gene>
    <name evidence="1" type="primary">atpH</name>
    <name type="ordered locus">CBU_1942</name>
</gene>
<accession>Q83AF8</accession>
<reference key="1">
    <citation type="journal article" date="2003" name="Proc. Natl. Acad. Sci. U.S.A.">
        <title>Complete genome sequence of the Q-fever pathogen, Coxiella burnetii.</title>
        <authorList>
            <person name="Seshadri R."/>
            <person name="Paulsen I.T."/>
            <person name="Eisen J.A."/>
            <person name="Read T.D."/>
            <person name="Nelson K.E."/>
            <person name="Nelson W.C."/>
            <person name="Ward N.L."/>
            <person name="Tettelin H."/>
            <person name="Davidsen T.M."/>
            <person name="Beanan M.J."/>
            <person name="DeBoy R.T."/>
            <person name="Daugherty S.C."/>
            <person name="Brinkac L.M."/>
            <person name="Madupu R."/>
            <person name="Dodson R.J."/>
            <person name="Khouri H.M."/>
            <person name="Lee K.H."/>
            <person name="Carty H.A."/>
            <person name="Scanlan D."/>
            <person name="Heinzen R.A."/>
            <person name="Thompson H.A."/>
            <person name="Samuel J.E."/>
            <person name="Fraser C.M."/>
            <person name="Heidelberg J.F."/>
        </authorList>
    </citation>
    <scope>NUCLEOTIDE SEQUENCE [LARGE SCALE GENOMIC DNA]</scope>
    <source>
        <strain>RSA 493 / Nine Mile phase I</strain>
    </source>
</reference>
<proteinExistence type="inferred from homology"/>
<sequence length="185" mass="21189">MALHLTLARPYAKAAFADGQKANQLEAWLAVFTAFSKIIKNKEVARQIINPKFSDKEIKTLLFDLIQTIEPESTKQLKDKIDHFLQLLIDEKRLMILPDIALVYQQLLNKYQGIIEASVTYVFPLNDEHRQQIQKQLEKRFNAEVKLKMIKDESLLGGVIIRAGNWVMDGSIKGKLTRLAENLKG</sequence>
<evidence type="ECO:0000255" key="1">
    <source>
        <dbReference type="HAMAP-Rule" id="MF_01416"/>
    </source>
</evidence>
<dbReference type="EMBL" id="AE016828">
    <property type="protein sequence ID" value="AAO91432.1"/>
    <property type="molecule type" value="Genomic_DNA"/>
</dbReference>
<dbReference type="RefSeq" id="NP_820918.1">
    <property type="nucleotide sequence ID" value="NC_002971.4"/>
</dbReference>
<dbReference type="RefSeq" id="WP_010958555.1">
    <property type="nucleotide sequence ID" value="NZ_CCYB01000003.1"/>
</dbReference>
<dbReference type="SMR" id="Q83AF8"/>
<dbReference type="STRING" id="227377.CBU_1942"/>
<dbReference type="EnsemblBacteria" id="AAO91432">
    <property type="protein sequence ID" value="AAO91432"/>
    <property type="gene ID" value="CBU_1942"/>
</dbReference>
<dbReference type="GeneID" id="1209855"/>
<dbReference type="KEGG" id="cbu:CBU_1942"/>
<dbReference type="PATRIC" id="fig|227377.7.peg.1928"/>
<dbReference type="eggNOG" id="COG0712">
    <property type="taxonomic scope" value="Bacteria"/>
</dbReference>
<dbReference type="HOGENOM" id="CLU_085114_3_0_6"/>
<dbReference type="OrthoDB" id="9816221at2"/>
<dbReference type="Proteomes" id="UP000002671">
    <property type="component" value="Chromosome"/>
</dbReference>
<dbReference type="GO" id="GO:0005886">
    <property type="term" value="C:plasma membrane"/>
    <property type="evidence" value="ECO:0007669"/>
    <property type="project" value="UniProtKB-SubCell"/>
</dbReference>
<dbReference type="GO" id="GO:0045259">
    <property type="term" value="C:proton-transporting ATP synthase complex"/>
    <property type="evidence" value="ECO:0007669"/>
    <property type="project" value="UniProtKB-KW"/>
</dbReference>
<dbReference type="GO" id="GO:0046933">
    <property type="term" value="F:proton-transporting ATP synthase activity, rotational mechanism"/>
    <property type="evidence" value="ECO:0007669"/>
    <property type="project" value="UniProtKB-UniRule"/>
</dbReference>
<dbReference type="GO" id="GO:0015986">
    <property type="term" value="P:proton motive force-driven ATP synthesis"/>
    <property type="evidence" value="ECO:0000318"/>
    <property type="project" value="GO_Central"/>
</dbReference>
<dbReference type="Gene3D" id="1.10.520.20">
    <property type="entry name" value="N-terminal domain of the delta subunit of the F1F0-ATP synthase"/>
    <property type="match status" value="1"/>
</dbReference>
<dbReference type="HAMAP" id="MF_01416">
    <property type="entry name" value="ATP_synth_delta_bact"/>
    <property type="match status" value="1"/>
</dbReference>
<dbReference type="InterPro" id="IPR026015">
    <property type="entry name" value="ATP_synth_OSCP/delta_N_sf"/>
</dbReference>
<dbReference type="InterPro" id="IPR000711">
    <property type="entry name" value="ATPase_OSCP/dsu"/>
</dbReference>
<dbReference type="NCBIfam" id="TIGR01145">
    <property type="entry name" value="ATP_synt_delta"/>
    <property type="match status" value="1"/>
</dbReference>
<dbReference type="NCBIfam" id="NF004402">
    <property type="entry name" value="PRK05758.2-2"/>
    <property type="match status" value="1"/>
</dbReference>
<dbReference type="PANTHER" id="PTHR11910">
    <property type="entry name" value="ATP SYNTHASE DELTA CHAIN"/>
    <property type="match status" value="1"/>
</dbReference>
<dbReference type="Pfam" id="PF00213">
    <property type="entry name" value="OSCP"/>
    <property type="match status" value="1"/>
</dbReference>
<dbReference type="PRINTS" id="PR00125">
    <property type="entry name" value="ATPASEDELTA"/>
</dbReference>
<dbReference type="SUPFAM" id="SSF47928">
    <property type="entry name" value="N-terminal domain of the delta subunit of the F1F0-ATP synthase"/>
    <property type="match status" value="1"/>
</dbReference>
<feature type="chain" id="PRO_1000184686" description="ATP synthase subunit delta">
    <location>
        <begin position="1"/>
        <end position="185"/>
    </location>
</feature>
<name>ATPD_COXBU</name>